<gene>
    <name type="ordered locus">Bamb_5282</name>
</gene>
<feature type="chain" id="PRO_0000379826" description="Putative hydro-lyase Bamb_5282">
    <location>
        <begin position="1"/>
        <end position="257"/>
    </location>
</feature>
<proteinExistence type="inferred from homology"/>
<sequence>MTPSEFRQSVRSGAFRQPTAGQCGPFAQANLAILPNAYAHDFLRFCQANPKACPLLGVGEPGAFRLDVLGEDLDIRTDVPSYNVYRDGRLTERVESLEALWRDDFVVFAIGCSFSFEDMLAREGIALRHIEEGRNVPMYRTSIPNRRAGIFGGQLVVSMRPLRGADAIRAVQITSRFPGVHGAPVHIGHPLELGIADLGTPDFGDAVTVRDGELPVFWACGVTPQTALMEAKLPLAIAHTPGYMLMTDITNASLAVF</sequence>
<organism>
    <name type="scientific">Burkholderia ambifaria (strain ATCC BAA-244 / DSM 16087 / CCUG 44356 / LMG 19182 / AMMD)</name>
    <name type="common">Burkholderia cepacia (strain AMMD)</name>
    <dbReference type="NCBI Taxonomy" id="339670"/>
    <lineage>
        <taxon>Bacteria</taxon>
        <taxon>Pseudomonadati</taxon>
        <taxon>Pseudomonadota</taxon>
        <taxon>Betaproteobacteria</taxon>
        <taxon>Burkholderiales</taxon>
        <taxon>Burkholderiaceae</taxon>
        <taxon>Burkholderia</taxon>
        <taxon>Burkholderia cepacia complex</taxon>
    </lineage>
</organism>
<comment type="similarity">
    <text evidence="1">Belongs to the D-glutamate cyclase family.</text>
</comment>
<keyword id="KW-0456">Lyase</keyword>
<evidence type="ECO:0000255" key="1">
    <source>
        <dbReference type="HAMAP-Rule" id="MF_01830"/>
    </source>
</evidence>
<dbReference type="EC" id="4.2.1.-" evidence="1"/>
<dbReference type="EMBL" id="CP000441">
    <property type="protein sequence ID" value="ABI90829.1"/>
    <property type="molecule type" value="Genomic_DNA"/>
</dbReference>
<dbReference type="RefSeq" id="WP_011660204.1">
    <property type="nucleotide sequence ID" value="NZ_CP009799.1"/>
</dbReference>
<dbReference type="SMR" id="Q0B4U4"/>
<dbReference type="KEGG" id="bam:Bamb_5282"/>
<dbReference type="PATRIC" id="fig|339670.21.peg.5686"/>
<dbReference type="eggNOG" id="COG4336">
    <property type="taxonomic scope" value="Bacteria"/>
</dbReference>
<dbReference type="Proteomes" id="UP000000662">
    <property type="component" value="Chromosome 2"/>
</dbReference>
<dbReference type="GO" id="GO:0016829">
    <property type="term" value="F:lyase activity"/>
    <property type="evidence" value="ECO:0007669"/>
    <property type="project" value="UniProtKB-KW"/>
</dbReference>
<dbReference type="FunFam" id="3.30.2040.10:FF:000001">
    <property type="entry name" value="D-glutamate cyclase, mitochondrial"/>
    <property type="match status" value="1"/>
</dbReference>
<dbReference type="Gene3D" id="3.40.1640.10">
    <property type="entry name" value="PSTPO5379-like"/>
    <property type="match status" value="1"/>
</dbReference>
<dbReference type="Gene3D" id="3.30.2040.10">
    <property type="entry name" value="PSTPO5379-like domain"/>
    <property type="match status" value="1"/>
</dbReference>
<dbReference type="HAMAP" id="MF_01830">
    <property type="entry name" value="Hydro_lyase"/>
    <property type="match status" value="1"/>
</dbReference>
<dbReference type="InterPro" id="IPR009906">
    <property type="entry name" value="D-Glu_cyclase"/>
</dbReference>
<dbReference type="InterPro" id="IPR038021">
    <property type="entry name" value="Putative_hydro-lyase"/>
</dbReference>
<dbReference type="InterPro" id="IPR016938">
    <property type="entry name" value="UPF0317"/>
</dbReference>
<dbReference type="NCBIfam" id="NF003969">
    <property type="entry name" value="PRK05463.1"/>
    <property type="match status" value="1"/>
</dbReference>
<dbReference type="PANTHER" id="PTHR32022">
    <property type="entry name" value="D-GLUTAMATE CYCLASE, MITOCHONDRIAL"/>
    <property type="match status" value="1"/>
</dbReference>
<dbReference type="PANTHER" id="PTHR32022:SF10">
    <property type="entry name" value="D-GLUTAMATE CYCLASE, MITOCHONDRIAL"/>
    <property type="match status" value="1"/>
</dbReference>
<dbReference type="Pfam" id="PF07286">
    <property type="entry name" value="D-Glu_cyclase"/>
    <property type="match status" value="1"/>
</dbReference>
<dbReference type="PIRSF" id="PIRSF029755">
    <property type="entry name" value="UCP029755"/>
    <property type="match status" value="1"/>
</dbReference>
<dbReference type="SUPFAM" id="SSF160920">
    <property type="entry name" value="PSTPO5379-like"/>
    <property type="match status" value="1"/>
</dbReference>
<name>Y5282_BURCM</name>
<accession>Q0B4U4</accession>
<protein>
    <recommendedName>
        <fullName evidence="1">Putative hydro-lyase Bamb_5282</fullName>
        <ecNumber evidence="1">4.2.1.-</ecNumber>
    </recommendedName>
</protein>
<reference key="1">
    <citation type="submission" date="2006-08" db="EMBL/GenBank/DDBJ databases">
        <title>Complete sequence of chromosome 2 of Burkholderia cepacia AMMD.</title>
        <authorList>
            <person name="Copeland A."/>
            <person name="Lucas S."/>
            <person name="Lapidus A."/>
            <person name="Barry K."/>
            <person name="Detter J.C."/>
            <person name="Glavina del Rio T."/>
            <person name="Hammon N."/>
            <person name="Israni S."/>
            <person name="Pitluck S."/>
            <person name="Bruce D."/>
            <person name="Chain P."/>
            <person name="Malfatti S."/>
            <person name="Shin M."/>
            <person name="Vergez L."/>
            <person name="Schmutz J."/>
            <person name="Larimer F."/>
            <person name="Land M."/>
            <person name="Hauser L."/>
            <person name="Kyrpides N."/>
            <person name="Kim E."/>
            <person name="Parke J."/>
            <person name="Coenye T."/>
            <person name="Konstantinidis K."/>
            <person name="Ramette A."/>
            <person name="Tiedje J."/>
            <person name="Richardson P."/>
        </authorList>
    </citation>
    <scope>NUCLEOTIDE SEQUENCE [LARGE SCALE GENOMIC DNA]</scope>
    <source>
        <strain>ATCC BAA-244 / DSM 16087 / CCUG 44356 / LMG 19182 / AMMD</strain>
    </source>
</reference>